<dbReference type="EC" id="6.3.2.31" evidence="1"/>
<dbReference type="EC" id="6.3.2.34" evidence="1"/>
<dbReference type="EMBL" id="AY596297">
    <property type="protein sequence ID" value="AAV47246.1"/>
    <property type="molecule type" value="Genomic_DNA"/>
</dbReference>
<dbReference type="RefSeq" id="WP_007189416.1">
    <property type="nucleotide sequence ID" value="NZ_CP039138.1"/>
</dbReference>
<dbReference type="SMR" id="Q5UZQ7"/>
<dbReference type="STRING" id="272569.rrnAC2436"/>
<dbReference type="PaxDb" id="272569-rrnAC2436"/>
<dbReference type="EnsemblBacteria" id="AAV47246">
    <property type="protein sequence ID" value="AAV47246"/>
    <property type="gene ID" value="rrnAC2436"/>
</dbReference>
<dbReference type="KEGG" id="hma:rrnAC2436"/>
<dbReference type="PATRIC" id="fig|272569.17.peg.3049"/>
<dbReference type="eggNOG" id="arCOG02714">
    <property type="taxonomic scope" value="Archaea"/>
</dbReference>
<dbReference type="HOGENOM" id="CLU_051152_1_1_2"/>
<dbReference type="UniPathway" id="UPA00071"/>
<dbReference type="Proteomes" id="UP000001169">
    <property type="component" value="Chromosome I"/>
</dbReference>
<dbReference type="GO" id="GO:0052618">
    <property type="term" value="F:coenzyme F420-0:L-glutamate ligase activity"/>
    <property type="evidence" value="ECO:0007669"/>
    <property type="project" value="UniProtKB-UniRule"/>
</dbReference>
<dbReference type="GO" id="GO:0052619">
    <property type="term" value="F:coenzyme F420-1:gamma-L-glutamate ligase activity"/>
    <property type="evidence" value="ECO:0007669"/>
    <property type="project" value="UniProtKB-UniRule"/>
</dbReference>
<dbReference type="GO" id="GO:0005525">
    <property type="term" value="F:GTP binding"/>
    <property type="evidence" value="ECO:0007669"/>
    <property type="project" value="UniProtKB-KW"/>
</dbReference>
<dbReference type="GO" id="GO:0046872">
    <property type="term" value="F:metal ion binding"/>
    <property type="evidence" value="ECO:0007669"/>
    <property type="project" value="UniProtKB-KW"/>
</dbReference>
<dbReference type="GO" id="GO:0052645">
    <property type="term" value="P:F420-0 metabolic process"/>
    <property type="evidence" value="ECO:0007669"/>
    <property type="project" value="UniProtKB-UniRule"/>
</dbReference>
<dbReference type="Gene3D" id="3.30.1330.100">
    <property type="entry name" value="CofE-like"/>
    <property type="match status" value="1"/>
</dbReference>
<dbReference type="Gene3D" id="3.90.1660.10">
    <property type="entry name" value="CofE-like domain"/>
    <property type="match status" value="1"/>
</dbReference>
<dbReference type="HAMAP" id="MF_01258">
    <property type="entry name" value="F420_ligase_CofE"/>
    <property type="match status" value="1"/>
</dbReference>
<dbReference type="InterPro" id="IPR008225">
    <property type="entry name" value="F420-0_g-glutamyl_ligase"/>
</dbReference>
<dbReference type="InterPro" id="IPR002847">
    <property type="entry name" value="F420-0_gamma-glut_ligase-dom"/>
</dbReference>
<dbReference type="InterPro" id="IPR023659">
    <property type="entry name" value="F420_ligase_CofE_arc"/>
</dbReference>
<dbReference type="NCBIfam" id="TIGR01916">
    <property type="entry name" value="F420_cofE"/>
    <property type="match status" value="1"/>
</dbReference>
<dbReference type="NCBIfam" id="NF009809">
    <property type="entry name" value="PRK13293.1"/>
    <property type="match status" value="1"/>
</dbReference>
<dbReference type="PANTHER" id="PTHR47917">
    <property type="match status" value="1"/>
</dbReference>
<dbReference type="PANTHER" id="PTHR47917:SF1">
    <property type="entry name" value="COENZYME F420:L-GLUTAMATE LIGASE"/>
    <property type="match status" value="1"/>
</dbReference>
<dbReference type="Pfam" id="PF01996">
    <property type="entry name" value="F420_ligase"/>
    <property type="match status" value="1"/>
</dbReference>
<dbReference type="SUPFAM" id="SSF144010">
    <property type="entry name" value="CofE-like"/>
    <property type="match status" value="1"/>
</dbReference>
<organism>
    <name type="scientific">Haloarcula marismortui (strain ATCC 43049 / DSM 3752 / JCM 8966 / VKM B-1809)</name>
    <name type="common">Halobacterium marismortui</name>
    <dbReference type="NCBI Taxonomy" id="272569"/>
    <lineage>
        <taxon>Archaea</taxon>
        <taxon>Methanobacteriati</taxon>
        <taxon>Methanobacteriota</taxon>
        <taxon>Stenosarchaea group</taxon>
        <taxon>Halobacteria</taxon>
        <taxon>Halobacteriales</taxon>
        <taxon>Haloarculaceae</taxon>
        <taxon>Haloarcula</taxon>
    </lineage>
</organism>
<gene>
    <name evidence="1" type="primary">cofE</name>
    <name type="ordered locus">rrnAC2436</name>
</gene>
<comment type="function">
    <text evidence="1">Catalyzes the GTP-dependent successive addition of two or more gamma-linked L-glutamates to the L-lactyl phosphodiester of 7,8-didemethyl-8-hydroxy-5-deazariboflavin (F420-0) to form coenzyme F420-0-glutamyl-glutamate (F420-2) or polyglutamated F420 derivatives.</text>
</comment>
<comment type="catalytic activity">
    <reaction evidence="1">
        <text>oxidized coenzyme F420-0 + GTP + L-glutamate = oxidized coenzyme F420-1 + GDP + phosphate + H(+)</text>
        <dbReference type="Rhea" id="RHEA:30555"/>
        <dbReference type="ChEBI" id="CHEBI:15378"/>
        <dbReference type="ChEBI" id="CHEBI:29985"/>
        <dbReference type="ChEBI" id="CHEBI:37565"/>
        <dbReference type="ChEBI" id="CHEBI:43474"/>
        <dbReference type="ChEBI" id="CHEBI:58189"/>
        <dbReference type="ChEBI" id="CHEBI:59907"/>
        <dbReference type="ChEBI" id="CHEBI:59920"/>
        <dbReference type="EC" id="6.3.2.31"/>
    </reaction>
</comment>
<comment type="catalytic activity">
    <reaction evidence="1">
        <text>oxidized coenzyme F420-1 + GTP + L-glutamate = oxidized coenzyme F420-2 + GDP + phosphate + H(+)</text>
        <dbReference type="Rhea" id="RHEA:30523"/>
        <dbReference type="ChEBI" id="CHEBI:15378"/>
        <dbReference type="ChEBI" id="CHEBI:29985"/>
        <dbReference type="ChEBI" id="CHEBI:37565"/>
        <dbReference type="ChEBI" id="CHEBI:43474"/>
        <dbReference type="ChEBI" id="CHEBI:57922"/>
        <dbReference type="ChEBI" id="CHEBI:58189"/>
        <dbReference type="ChEBI" id="CHEBI:59920"/>
        <dbReference type="EC" id="6.3.2.34"/>
    </reaction>
</comment>
<comment type="cofactor">
    <cofactor evidence="1">
        <name>Mg(2+)</name>
        <dbReference type="ChEBI" id="CHEBI:18420"/>
    </cofactor>
    <cofactor evidence="1">
        <name>Mn(2+)</name>
        <dbReference type="ChEBI" id="CHEBI:29035"/>
    </cofactor>
    <text evidence="1">Binds 2 divalent metal cations per subunit. The ions could be magnesium and/or manganese.</text>
</comment>
<comment type="cofactor">
    <cofactor evidence="1">
        <name>K(+)</name>
        <dbReference type="ChEBI" id="CHEBI:29103"/>
    </cofactor>
    <text evidence="1">Monovalent cation. The ion could be potassium.</text>
</comment>
<comment type="pathway">
    <text evidence="1">Cofactor biosynthesis; coenzyme F420 biosynthesis.</text>
</comment>
<comment type="subunit">
    <text evidence="1">Homodimer.</text>
</comment>
<comment type="similarity">
    <text evidence="1">Belongs to the CofE family.</text>
</comment>
<proteinExistence type="inferred from homology"/>
<feature type="chain" id="PRO_0000145786" description="Coenzyme F420:L-glutamate ligase">
    <location>
        <begin position="1"/>
        <end position="257"/>
    </location>
</feature>
<feature type="binding site" evidence="1">
    <location>
        <begin position="9"/>
        <end position="12"/>
    </location>
    <ligand>
        <name>GTP</name>
        <dbReference type="ChEBI" id="CHEBI:37565"/>
    </ligand>
</feature>
<feature type="binding site" evidence="1">
    <location>
        <begin position="38"/>
        <end position="39"/>
    </location>
    <ligand>
        <name>GTP</name>
        <dbReference type="ChEBI" id="CHEBI:37565"/>
    </ligand>
</feature>
<feature type="binding site" evidence="1">
    <location>
        <position position="43"/>
    </location>
    <ligand>
        <name>GTP</name>
        <dbReference type="ChEBI" id="CHEBI:37565"/>
    </ligand>
</feature>
<feature type="binding site" evidence="1">
    <location>
        <position position="113"/>
    </location>
    <ligand>
        <name>a divalent metal cation</name>
        <dbReference type="ChEBI" id="CHEBI:60240"/>
        <label>1</label>
    </ligand>
</feature>
<feature type="binding site" evidence="1">
    <location>
        <position position="116"/>
    </location>
    <ligand>
        <name>GTP</name>
        <dbReference type="ChEBI" id="CHEBI:37565"/>
    </ligand>
</feature>
<feature type="binding site" evidence="1">
    <location>
        <position position="154"/>
    </location>
    <ligand>
        <name>a divalent metal cation</name>
        <dbReference type="ChEBI" id="CHEBI:60240"/>
        <label>1</label>
    </ligand>
</feature>
<feature type="binding site" evidence="1">
    <location>
        <position position="155"/>
    </location>
    <ligand>
        <name>a divalent metal cation</name>
        <dbReference type="ChEBI" id="CHEBI:60240"/>
        <label>2</label>
    </ligand>
</feature>
<feature type="binding site" evidence="1">
    <location>
        <begin position="210"/>
        <end position="217"/>
    </location>
    <ligand>
        <name>GTP</name>
        <dbReference type="ChEBI" id="CHEBI:37565"/>
    </ligand>
</feature>
<feature type="binding site" evidence="1">
    <location>
        <position position="212"/>
    </location>
    <ligand>
        <name>a divalent metal cation</name>
        <dbReference type="ChEBI" id="CHEBI:60240"/>
        <label>2</label>
    </ligand>
</feature>
<evidence type="ECO:0000255" key="1">
    <source>
        <dbReference type="HAMAP-Rule" id="MF_01258"/>
    </source>
</evidence>
<name>COFE_HALMA</name>
<reference key="1">
    <citation type="journal article" date="2004" name="Genome Res.">
        <title>Genome sequence of Haloarcula marismortui: a halophilic archaeon from the Dead Sea.</title>
        <authorList>
            <person name="Baliga N.S."/>
            <person name="Bonneau R."/>
            <person name="Facciotti M.T."/>
            <person name="Pan M."/>
            <person name="Glusman G."/>
            <person name="Deutsch E.W."/>
            <person name="Shannon P."/>
            <person name="Chiu Y."/>
            <person name="Weng R.S."/>
            <person name="Gan R.R."/>
            <person name="Hung P."/>
            <person name="Date S.V."/>
            <person name="Marcotte E."/>
            <person name="Hood L."/>
            <person name="Ng W.V."/>
        </authorList>
    </citation>
    <scope>NUCLEOTIDE SEQUENCE [LARGE SCALE GENOMIC DNA]</scope>
    <source>
        <strain>ATCC 43049 / DSM 3752 / JCM 8966 / VKM B-1809</strain>
    </source>
</reference>
<keyword id="KW-0342">GTP-binding</keyword>
<keyword id="KW-0436">Ligase</keyword>
<keyword id="KW-0460">Magnesium</keyword>
<keyword id="KW-0464">Manganese</keyword>
<keyword id="KW-0479">Metal-binding</keyword>
<keyword id="KW-0547">Nucleotide-binding</keyword>
<keyword id="KW-0630">Potassium</keyword>
<keyword id="KW-1185">Reference proteome</keyword>
<protein>
    <recommendedName>
        <fullName evidence="1">Coenzyme F420:L-glutamate ligase</fullName>
        <ecNumber evidence="1">6.3.2.31</ecNumber>
        <ecNumber evidence="1">6.3.2.34</ecNumber>
    </recommendedName>
    <alternativeName>
        <fullName evidence="1">Coenzyme F420-0:L-glutamate ligase</fullName>
    </alternativeName>
    <alternativeName>
        <fullName evidence="1">Coenzyme F420-1:gamma-L-glutamate ligase</fullName>
    </alternativeName>
</protein>
<sequence length="257" mass="27600">MEVFAVEGVPEVRPGDDVAELLVEQADLQDDDVVCVASTIVSKANGRGRSLSSYEPSGRAERIAATIEDIADEEKDPRMAQAILDECEEVLVEAPFILGVTKFGHITVNAGIDRSNVPGADLLLLPEDPTAEAEAIRDGIREHAGVEPSVIVTDTSGRPFRLGQRGVALGWAGLSASRDWRGEHDRDGRELEATVQAVVDELAAAANLVTGEGDGGTPAAVVRDFDFGDHAGSEQLFRDPEKDVVRQALREWSHVRD</sequence>
<accession>Q5UZQ7</accession>